<organism>
    <name type="scientific">Homo sapiens</name>
    <name type="common">Human</name>
    <dbReference type="NCBI Taxonomy" id="9606"/>
    <lineage>
        <taxon>Eukaryota</taxon>
        <taxon>Metazoa</taxon>
        <taxon>Chordata</taxon>
        <taxon>Craniata</taxon>
        <taxon>Vertebrata</taxon>
        <taxon>Euteleostomi</taxon>
        <taxon>Mammalia</taxon>
        <taxon>Eutheria</taxon>
        <taxon>Euarchontoglires</taxon>
        <taxon>Primates</taxon>
        <taxon>Haplorrhini</taxon>
        <taxon>Catarrhini</taxon>
        <taxon>Hominidae</taxon>
        <taxon>Homo</taxon>
    </lineage>
</organism>
<keyword id="KW-0002">3D-structure</keyword>
<keyword id="KW-0025">Alternative splicing</keyword>
<keyword id="KW-1003">Cell membrane</keyword>
<keyword id="KW-0868">Chloride</keyword>
<keyword id="KW-1015">Disulfide bond</keyword>
<keyword id="KW-0325">Glycoprotein</keyword>
<keyword id="KW-0406">Ion transport</keyword>
<keyword id="KW-0472">Membrane</keyword>
<keyword id="KW-0597">Phosphoprotein</keyword>
<keyword id="KW-0630">Potassium</keyword>
<keyword id="KW-0633">Potassium transport</keyword>
<keyword id="KW-1267">Proteomics identification</keyword>
<keyword id="KW-1185">Reference proteome</keyword>
<keyword id="KW-0769">Symport</keyword>
<keyword id="KW-0812">Transmembrane</keyword>
<keyword id="KW-1133">Transmembrane helix</keyword>
<keyword id="KW-0813">Transport</keyword>
<accession>Q9UP95</accession>
<accession>B4DF69</accession>
<accession>B4DR04</accession>
<accession>B4DZ82</accession>
<accession>B7ZAV0</accession>
<accession>F5H066</accession>
<accession>F5H0S9</accession>
<accession>F5H3C0</accession>
<accession>O60632</accession>
<accession>O75893</accession>
<accession>Q13953</accession>
<accession>Q96LD5</accession>
<dbReference type="EMBL" id="U55054">
    <property type="protein sequence ID" value="AAC50563.1"/>
    <property type="molecule type" value="mRNA"/>
</dbReference>
<dbReference type="EMBL" id="AF047338">
    <property type="protein sequence ID" value="AAC32815.1"/>
    <property type="molecule type" value="mRNA"/>
</dbReference>
<dbReference type="EMBL" id="AF054505">
    <property type="protein sequence ID" value="AAC39684.1"/>
    <property type="molecule type" value="mRNA"/>
</dbReference>
<dbReference type="EMBL" id="AF054506">
    <property type="protein sequence ID" value="AAC39685.1"/>
    <property type="molecule type" value="mRNA"/>
</dbReference>
<dbReference type="EMBL" id="AK293956">
    <property type="protein sequence ID" value="BAG57330.1"/>
    <property type="status" value="ALT_INIT"/>
    <property type="molecule type" value="mRNA"/>
</dbReference>
<dbReference type="EMBL" id="AK299042">
    <property type="protein sequence ID" value="BAG61116.1"/>
    <property type="molecule type" value="mRNA"/>
</dbReference>
<dbReference type="EMBL" id="AK302790">
    <property type="protein sequence ID" value="BAG63994.1"/>
    <property type="molecule type" value="mRNA"/>
</dbReference>
<dbReference type="EMBL" id="AK316415">
    <property type="protein sequence ID" value="BAH14786.1"/>
    <property type="molecule type" value="mRNA"/>
</dbReference>
<dbReference type="EMBL" id="AC040162">
    <property type="status" value="NOT_ANNOTATED_CDS"/>
    <property type="molecule type" value="Genomic_DNA"/>
</dbReference>
<dbReference type="EMBL" id="BC021193">
    <property type="protein sequence ID" value="AAH21193.1"/>
    <property type="molecule type" value="mRNA"/>
</dbReference>
<dbReference type="EMBL" id="AF053402">
    <property type="protein sequence ID" value="AAC35282.1"/>
    <property type="status" value="ALT_FRAME"/>
    <property type="molecule type" value="mRNA"/>
</dbReference>
<dbReference type="EMBL" id="AY026038">
    <property type="protein sequence ID" value="AAK01946.1"/>
    <property type="molecule type" value="mRNA"/>
</dbReference>
<dbReference type="CCDS" id="CCDS10855.1">
    <molecule id="Q9UP95-1"/>
</dbReference>
<dbReference type="CCDS" id="CCDS54030.1">
    <molecule id="Q9UP95-6"/>
</dbReference>
<dbReference type="CCDS" id="CCDS54031.1">
    <molecule id="Q9UP95-5"/>
</dbReference>
<dbReference type="RefSeq" id="NP_001139433.1">
    <property type="nucleotide sequence ID" value="NM_001145961.1"/>
</dbReference>
<dbReference type="RefSeq" id="NP_001139434.1">
    <molecule id="Q9UP95-7"/>
    <property type="nucleotide sequence ID" value="NM_001145962.1"/>
</dbReference>
<dbReference type="RefSeq" id="NP_001139435.1">
    <molecule id="Q9UP95-6"/>
    <property type="nucleotide sequence ID" value="NM_001145963.2"/>
</dbReference>
<dbReference type="RefSeq" id="NP_001139436.1">
    <molecule id="Q9UP95-5"/>
    <property type="nucleotide sequence ID" value="NM_001145964.2"/>
</dbReference>
<dbReference type="RefSeq" id="NP_005063.1">
    <molecule id="Q9UP95-1"/>
    <property type="nucleotide sequence ID" value="NM_005072.5"/>
</dbReference>
<dbReference type="PDB" id="6KKR">
    <property type="method" value="EM"/>
    <property type="resolution" value="2.90 A"/>
    <property type="chains" value="A/B=1-1085"/>
</dbReference>
<dbReference type="PDB" id="6KKT">
    <property type="method" value="EM"/>
    <property type="resolution" value="2.90 A"/>
    <property type="chains" value="A/B=1-1085"/>
</dbReference>
<dbReference type="PDB" id="6KKU">
    <property type="method" value="EM"/>
    <property type="resolution" value="3.50 A"/>
    <property type="chains" value="A/B=1-1085"/>
</dbReference>
<dbReference type="PDB" id="7AIP">
    <property type="method" value="EM"/>
    <property type="resolution" value="3.12 A"/>
    <property type="chains" value="A/B=20-1085"/>
</dbReference>
<dbReference type="PDB" id="7AIQ">
    <property type="method" value="EM"/>
    <property type="resolution" value="3.72 A"/>
    <property type="chains" value="A/B=20-1085"/>
</dbReference>
<dbReference type="PDB" id="7AIR">
    <property type="method" value="EM"/>
    <property type="resolution" value="3.66 A"/>
    <property type="chains" value="A/B=20-1085"/>
</dbReference>
<dbReference type="PDB" id="7TTH">
    <property type="method" value="EM"/>
    <property type="resolution" value="3.25 A"/>
    <property type="chains" value="A/B=1-1085"/>
</dbReference>
<dbReference type="PDB" id="7TTI">
    <property type="method" value="EM"/>
    <property type="resolution" value="3.50 A"/>
    <property type="chains" value="A/B=1-1085"/>
</dbReference>
<dbReference type="PDBsum" id="6KKR"/>
<dbReference type="PDBsum" id="6KKT"/>
<dbReference type="PDBsum" id="6KKU"/>
<dbReference type="PDBsum" id="7AIP"/>
<dbReference type="PDBsum" id="7AIQ"/>
<dbReference type="PDBsum" id="7AIR"/>
<dbReference type="PDBsum" id="7TTH"/>
<dbReference type="PDBsum" id="7TTI"/>
<dbReference type="EMDB" id="EMD-0701"/>
<dbReference type="EMDB" id="EMD-0702"/>
<dbReference type="EMDB" id="EMD-0703"/>
<dbReference type="EMDB" id="EMD-11801"/>
<dbReference type="EMDB" id="EMD-11802"/>
<dbReference type="EMDB" id="EMD-11803"/>
<dbReference type="EMDB" id="EMD-26115"/>
<dbReference type="EMDB" id="EMD-26116"/>
<dbReference type="SMR" id="Q9UP95"/>
<dbReference type="BioGRID" id="112449">
    <property type="interactions" value="148"/>
</dbReference>
<dbReference type="FunCoup" id="Q9UP95">
    <property type="interactions" value="1194"/>
</dbReference>
<dbReference type="IntAct" id="Q9UP95">
    <property type="interactions" value="80"/>
</dbReference>
<dbReference type="MINT" id="Q9UP95"/>
<dbReference type="STRING" id="9606.ENSP00000395983"/>
<dbReference type="DrugBank" id="DB00887">
    <property type="generic name" value="Bumetanide"/>
</dbReference>
<dbReference type="DrugBank" id="DB00761">
    <property type="generic name" value="Potassium chloride"/>
</dbReference>
<dbReference type="TCDB" id="2.A.30.1.17">
    <property type="family name" value="the cation-chloride cotransporter (ccc) family"/>
</dbReference>
<dbReference type="GlyCosmos" id="Q9UP95">
    <property type="glycosylation" value="5 sites, No reported glycans"/>
</dbReference>
<dbReference type="GlyGen" id="Q9UP95">
    <property type="glycosylation" value="6 sites, 6 N-linked glycans (1 site), 1 O-linked glycan (1 site)"/>
</dbReference>
<dbReference type="iPTMnet" id="Q9UP95"/>
<dbReference type="PhosphoSitePlus" id="Q9UP95"/>
<dbReference type="BioMuta" id="SLC12A4"/>
<dbReference type="DMDM" id="27151691"/>
<dbReference type="jPOST" id="Q9UP95"/>
<dbReference type="MassIVE" id="Q9UP95"/>
<dbReference type="PaxDb" id="9606-ENSP00000395983"/>
<dbReference type="PeptideAtlas" id="Q9UP95"/>
<dbReference type="ProteomicsDB" id="25245"/>
<dbReference type="ProteomicsDB" id="25434"/>
<dbReference type="ProteomicsDB" id="26226"/>
<dbReference type="ProteomicsDB" id="85360">
    <molecule id="Q9UP95-1"/>
</dbReference>
<dbReference type="ProteomicsDB" id="85361">
    <molecule id="Q9UP95-2"/>
</dbReference>
<dbReference type="ProteomicsDB" id="85362">
    <molecule id="Q9UP95-3"/>
</dbReference>
<dbReference type="ProteomicsDB" id="85363">
    <molecule id="Q9UP95-4"/>
</dbReference>
<dbReference type="Pumba" id="Q9UP95"/>
<dbReference type="Antibodypedia" id="29685">
    <property type="antibodies" value="174 antibodies from 30 providers"/>
</dbReference>
<dbReference type="DNASU" id="6560"/>
<dbReference type="Ensembl" id="ENST00000316341.8">
    <molecule id="Q9UP95-1"/>
    <property type="protein sequence ID" value="ENSP00000318557.3"/>
    <property type="gene ID" value="ENSG00000124067.17"/>
</dbReference>
<dbReference type="Ensembl" id="ENST00000537830.6">
    <molecule id="Q9UP95-6"/>
    <property type="protein sequence ID" value="ENSP00000445962.2"/>
    <property type="gene ID" value="ENSG00000124067.17"/>
</dbReference>
<dbReference type="Ensembl" id="ENST00000541864.7">
    <molecule id="Q9UP95-5"/>
    <property type="protein sequence ID" value="ENSP00000438334.2"/>
    <property type="gene ID" value="ENSG00000124067.17"/>
</dbReference>
<dbReference type="Ensembl" id="ENST00000576616.5">
    <molecule id="Q9UP95-2"/>
    <property type="protein sequence ID" value="ENSP00000458902.1"/>
    <property type="gene ID" value="ENSG00000124067.17"/>
</dbReference>
<dbReference type="GeneID" id="6560"/>
<dbReference type="KEGG" id="hsa:6560"/>
<dbReference type="MANE-Select" id="ENST00000316341.8">
    <property type="protein sequence ID" value="ENSP00000318557.3"/>
    <property type="RefSeq nucleotide sequence ID" value="NM_005072.5"/>
    <property type="RefSeq protein sequence ID" value="NP_005063.1"/>
</dbReference>
<dbReference type="UCSC" id="uc002euz.2">
    <molecule id="Q9UP95-1"/>
    <property type="organism name" value="human"/>
</dbReference>
<dbReference type="AGR" id="HGNC:10913"/>
<dbReference type="CTD" id="6560"/>
<dbReference type="DisGeNET" id="6560"/>
<dbReference type="GeneCards" id="SLC12A4"/>
<dbReference type="HGNC" id="HGNC:10913">
    <property type="gene designation" value="SLC12A4"/>
</dbReference>
<dbReference type="HPA" id="ENSG00000124067">
    <property type="expression patterns" value="Low tissue specificity"/>
</dbReference>
<dbReference type="MalaCards" id="SLC12A4"/>
<dbReference type="MIM" id="604119">
    <property type="type" value="gene"/>
</dbReference>
<dbReference type="neXtProt" id="NX_Q9UP95"/>
<dbReference type="OpenTargets" id="ENSG00000124067"/>
<dbReference type="PharmGKB" id="PA35807"/>
<dbReference type="VEuPathDB" id="HostDB:ENSG00000124067"/>
<dbReference type="eggNOG" id="KOG2082">
    <property type="taxonomic scope" value="Eukaryota"/>
</dbReference>
<dbReference type="GeneTree" id="ENSGT00940000157672"/>
<dbReference type="HOGENOM" id="CLU_001883_1_1_1"/>
<dbReference type="InParanoid" id="Q9UP95"/>
<dbReference type="OMA" id="KNWRPHI"/>
<dbReference type="OrthoDB" id="2020542at2759"/>
<dbReference type="PAN-GO" id="Q9UP95">
    <property type="GO annotations" value="8 GO annotations based on evolutionary models"/>
</dbReference>
<dbReference type="PhylomeDB" id="Q9UP95"/>
<dbReference type="TreeFam" id="TF313657"/>
<dbReference type="PathwayCommons" id="Q9UP95"/>
<dbReference type="Reactome" id="R-HSA-426117">
    <property type="pathway name" value="Cation-coupled Chloride cotransporters"/>
</dbReference>
<dbReference type="SignaLink" id="Q9UP95"/>
<dbReference type="SIGNOR" id="Q9UP95"/>
<dbReference type="BioGRID-ORCS" id="6560">
    <property type="hits" value="25 hits in 1170 CRISPR screens"/>
</dbReference>
<dbReference type="ChiTaRS" id="SLC12A4">
    <property type="organism name" value="human"/>
</dbReference>
<dbReference type="GeneWiki" id="Chloride_potassium_symporter_4"/>
<dbReference type="GenomeRNAi" id="6560"/>
<dbReference type="Pharos" id="Q9UP95">
    <property type="development level" value="Tbio"/>
</dbReference>
<dbReference type="PRO" id="PR:Q9UP95"/>
<dbReference type="Proteomes" id="UP000005640">
    <property type="component" value="Chromosome 16"/>
</dbReference>
<dbReference type="RNAct" id="Q9UP95">
    <property type="molecule type" value="protein"/>
</dbReference>
<dbReference type="Bgee" id="ENSG00000124067">
    <property type="expression patterns" value="Expressed in apex of heart and 145 other cell types or tissues"/>
</dbReference>
<dbReference type="ExpressionAtlas" id="Q9UP95">
    <property type="expression patterns" value="baseline and differential"/>
</dbReference>
<dbReference type="GO" id="GO:0005765">
    <property type="term" value="C:lysosomal membrane"/>
    <property type="evidence" value="ECO:0007005"/>
    <property type="project" value="UniProtKB"/>
</dbReference>
<dbReference type="GO" id="GO:0016020">
    <property type="term" value="C:membrane"/>
    <property type="evidence" value="ECO:0000304"/>
    <property type="project" value="ProtInc"/>
</dbReference>
<dbReference type="GO" id="GO:0005886">
    <property type="term" value="C:plasma membrane"/>
    <property type="evidence" value="ECO:0000250"/>
    <property type="project" value="UniProtKB"/>
</dbReference>
<dbReference type="GO" id="GO:0045202">
    <property type="term" value="C:synapse"/>
    <property type="evidence" value="ECO:0007669"/>
    <property type="project" value="GOC"/>
</dbReference>
<dbReference type="GO" id="GO:0005524">
    <property type="term" value="F:ATP binding"/>
    <property type="evidence" value="ECO:0000314"/>
    <property type="project" value="UniProtKB"/>
</dbReference>
<dbReference type="GO" id="GO:0015379">
    <property type="term" value="F:potassium:chloride symporter activity"/>
    <property type="evidence" value="ECO:0000314"/>
    <property type="project" value="UniProtKB"/>
</dbReference>
<dbReference type="GO" id="GO:0120283">
    <property type="term" value="F:protein serine/threonine kinase binding"/>
    <property type="evidence" value="ECO:0000353"/>
    <property type="project" value="ParkinsonsUK-UCL"/>
</dbReference>
<dbReference type="GO" id="GO:0006884">
    <property type="term" value="P:cell volume homeostasis"/>
    <property type="evidence" value="ECO:0000318"/>
    <property type="project" value="GO_Central"/>
</dbReference>
<dbReference type="GO" id="GO:0007268">
    <property type="term" value="P:chemical synaptic transmission"/>
    <property type="evidence" value="ECO:0000318"/>
    <property type="project" value="GO_Central"/>
</dbReference>
<dbReference type="GO" id="GO:0055064">
    <property type="term" value="P:chloride ion homeostasis"/>
    <property type="evidence" value="ECO:0000250"/>
    <property type="project" value="UniProtKB"/>
</dbReference>
<dbReference type="GO" id="GO:1902476">
    <property type="term" value="P:chloride transmembrane transport"/>
    <property type="evidence" value="ECO:0000318"/>
    <property type="project" value="GO_Central"/>
</dbReference>
<dbReference type="GO" id="GO:0006811">
    <property type="term" value="P:monoatomic ion transport"/>
    <property type="evidence" value="ECO:0000304"/>
    <property type="project" value="Reactome"/>
</dbReference>
<dbReference type="GO" id="GO:0055075">
    <property type="term" value="P:potassium ion homeostasis"/>
    <property type="evidence" value="ECO:0000250"/>
    <property type="project" value="UniProtKB"/>
</dbReference>
<dbReference type="GO" id="GO:1990573">
    <property type="term" value="P:potassium ion import across plasma membrane"/>
    <property type="evidence" value="ECO:0000250"/>
    <property type="project" value="ARUK-UCL"/>
</dbReference>
<dbReference type="GO" id="GO:0071805">
    <property type="term" value="P:potassium ion transmembrane transport"/>
    <property type="evidence" value="ECO:0000250"/>
    <property type="project" value="UniProtKB"/>
</dbReference>
<dbReference type="FunFam" id="1.20.1740.10:FF:000049">
    <property type="entry name" value="Solute carrier family 12 (potassium/chloride transporter), member 4"/>
    <property type="match status" value="1"/>
</dbReference>
<dbReference type="FunFam" id="1.20.1740.10:FF:000040">
    <property type="entry name" value="Solute carrier family 12 member 6"/>
    <property type="match status" value="1"/>
</dbReference>
<dbReference type="Gene3D" id="1.20.1740.10">
    <property type="entry name" value="Amino acid/polyamine transporter I"/>
    <property type="match status" value="1"/>
</dbReference>
<dbReference type="InterPro" id="IPR004841">
    <property type="entry name" value="AA-permease/SLC12A_dom"/>
</dbReference>
<dbReference type="InterPro" id="IPR000622">
    <property type="entry name" value="KCC1"/>
</dbReference>
<dbReference type="InterPro" id="IPR000076">
    <property type="entry name" value="KCL_cotranspt"/>
</dbReference>
<dbReference type="InterPro" id="IPR018491">
    <property type="entry name" value="SLC12_C"/>
</dbReference>
<dbReference type="InterPro" id="IPR004842">
    <property type="entry name" value="SLC12A_fam"/>
</dbReference>
<dbReference type="NCBIfam" id="TIGR00930">
    <property type="entry name" value="2a30"/>
    <property type="match status" value="1"/>
</dbReference>
<dbReference type="PANTHER" id="PTHR11827:SF46">
    <property type="entry name" value="SOLUTE CARRIER FAMILY 12 MEMBER 4"/>
    <property type="match status" value="1"/>
</dbReference>
<dbReference type="PANTHER" id="PTHR11827">
    <property type="entry name" value="SOLUTE CARRIER FAMILY 12, CATION COTRANSPORTERS"/>
    <property type="match status" value="1"/>
</dbReference>
<dbReference type="Pfam" id="PF00324">
    <property type="entry name" value="AA_permease"/>
    <property type="match status" value="2"/>
</dbReference>
<dbReference type="Pfam" id="PF03522">
    <property type="entry name" value="SLC12"/>
    <property type="match status" value="2"/>
</dbReference>
<dbReference type="PRINTS" id="PR01081">
    <property type="entry name" value="KCLTRNSPORT"/>
</dbReference>
<dbReference type="PRINTS" id="PR01082">
    <property type="entry name" value="KCLTRNSPORT1"/>
</dbReference>
<feature type="chain" id="PRO_0000178030" description="Solute carrier family 12 member 4">
    <location>
        <begin position="1"/>
        <end position="1085"/>
    </location>
</feature>
<feature type="topological domain" description="Cytoplasmic" evidence="7 8 21 22 23 24 25 26">
    <location>
        <begin position="1"/>
        <end position="119"/>
    </location>
</feature>
<feature type="transmembrane region" description="Discontinuously helical; Name=1" evidence="7 8 21 22 23 24 25 26">
    <location>
        <begin position="120"/>
        <end position="141"/>
    </location>
</feature>
<feature type="topological domain" description="Extracellular" evidence="7 8 21 22 23 24 25 26">
    <location>
        <begin position="142"/>
        <end position="149"/>
    </location>
</feature>
<feature type="transmembrane region" description="Helical; Name=2" evidence="7 8 21 22 23 24 25 26">
    <location>
        <begin position="150"/>
        <end position="172"/>
    </location>
</feature>
<feature type="topological domain" description="Cytoplasmic" evidence="7 8 21 22 23 24 25 26">
    <location>
        <begin position="173"/>
        <end position="196"/>
    </location>
</feature>
<feature type="transmembrane region" description="Helical; Name=3" evidence="7 8 21 22 23 24 25 26">
    <location>
        <begin position="197"/>
        <end position="225"/>
    </location>
</feature>
<feature type="topological domain" description="Extracellular" evidence="7 8 21 22 23 24 25 26">
    <location>
        <begin position="226"/>
        <end position="248"/>
    </location>
</feature>
<feature type="transmembrane region" description="Helical; Name=4" evidence="7 8 21 22 23 24 25 26">
    <location>
        <begin position="249"/>
        <end position="271"/>
    </location>
</feature>
<feature type="transmembrane region" description="Helical; Name=5" evidence="7 8 21 22 23 24 25 26">
    <location>
        <begin position="272"/>
        <end position="297"/>
    </location>
</feature>
<feature type="topological domain" description="Extracellular" evidence="7 8 21 22 23 24 25 26">
    <location>
        <begin position="298"/>
        <end position="419"/>
    </location>
</feature>
<feature type="transmembrane region" description="Helical; Name=6" evidence="7 8 21 22 23 24 25 26">
    <location>
        <begin position="420"/>
        <end position="440"/>
    </location>
</feature>
<feature type="topological domain" description="Cytoplasmic" evidence="7 8 21 22 23 24 25 26">
    <location>
        <begin position="441"/>
        <end position="450"/>
    </location>
</feature>
<feature type="transmembrane region" description="Helical; Name=7" evidence="7 8 21 22 23 24 25 26">
    <location>
        <begin position="451"/>
        <end position="473"/>
    </location>
</feature>
<feature type="topological domain" description="Extracellular" evidence="7 8 21 22 23 24 25 26">
    <location>
        <begin position="474"/>
        <end position="504"/>
    </location>
</feature>
<feature type="transmembrane region" description="Helical; Name=8" evidence="7 8 21 22 23 24 25 26">
    <location>
        <begin position="505"/>
        <end position="531"/>
    </location>
</feature>
<feature type="topological domain" description="Cytoplasmic" evidence="7 8 21 22 23 24 25 26">
    <location>
        <begin position="532"/>
        <end position="554"/>
    </location>
</feature>
<feature type="transmembrane region" description="Helical; Name=9" evidence="7 8 21 22 23 24 25 26">
    <location>
        <begin position="555"/>
        <end position="575"/>
    </location>
</feature>
<feature type="transmembrane region" description="Helical; Name=10" evidence="7 8 21 22 23 24 25 26">
    <location>
        <begin position="576"/>
        <end position="598"/>
    </location>
</feature>
<feature type="topological domain" description="Cytoplasmic" evidence="7 8 21 22 23 24 25 26">
    <location>
        <begin position="599"/>
        <end position="612"/>
    </location>
</feature>
<feature type="transmembrane region" description="Helical; Name=11" evidence="7 8 21 22 23 24 25 26">
    <location>
        <begin position="613"/>
        <end position="635"/>
    </location>
</feature>
<feature type="transmembrane region" description="Helical; Name=12" evidence="7 8 21 22 23 24 25 26">
    <location>
        <begin position="636"/>
        <end position="651"/>
    </location>
</feature>
<feature type="topological domain" description="Cytoplasmic" evidence="7 8 21 22 23 24 25 26">
    <location>
        <begin position="652"/>
        <end position="1085"/>
    </location>
</feature>
<feature type="region of interest" description="Scissor helix" evidence="8 9 24 25 26 27">
    <location>
        <begin position="665"/>
        <end position="681"/>
    </location>
</feature>
<feature type="binding site" evidence="7 21 22">
    <location>
        <position position="131"/>
    </location>
    <ligand>
        <name>K(+)</name>
        <dbReference type="ChEBI" id="CHEBI:29103"/>
    </ligand>
</feature>
<feature type="binding site" evidence="7 9 21 22 27">
    <location>
        <position position="132"/>
    </location>
    <ligand>
        <name>K(+)</name>
        <dbReference type="ChEBI" id="CHEBI:29103"/>
    </ligand>
</feature>
<feature type="binding site" evidence="7 21">
    <location>
        <position position="216"/>
    </location>
    <ligand>
        <name>K(+)</name>
        <dbReference type="ChEBI" id="CHEBI:29103"/>
    </ligand>
</feature>
<feature type="binding site" evidence="7 9 21 22 27">
    <location>
        <position position="429"/>
    </location>
    <ligand>
        <name>K(+)</name>
        <dbReference type="ChEBI" id="CHEBI:29103"/>
    </ligand>
</feature>
<feature type="binding site" evidence="7 9 21 22 27">
    <location>
        <position position="432"/>
    </location>
    <ligand>
        <name>K(+)</name>
        <dbReference type="ChEBI" id="CHEBI:29103"/>
    </ligand>
</feature>
<feature type="binding site" evidence="19">
    <location>
        <position position="433"/>
    </location>
    <ligand>
        <name>chloride</name>
        <dbReference type="ChEBI" id="CHEBI:17996"/>
        <label>1</label>
    </ligand>
</feature>
<feature type="binding site" evidence="19">
    <location>
        <position position="434"/>
    </location>
    <ligand>
        <name>chloride</name>
        <dbReference type="ChEBI" id="CHEBI:17996"/>
        <label>1</label>
    </ligand>
</feature>
<feature type="binding site" evidence="19">
    <location>
        <position position="435"/>
    </location>
    <ligand>
        <name>chloride</name>
        <dbReference type="ChEBI" id="CHEBI:17996"/>
        <label>1</label>
    </ligand>
</feature>
<feature type="binding site" evidence="19">
    <location>
        <position position="589"/>
    </location>
    <ligand>
        <name>chloride</name>
        <dbReference type="ChEBI" id="CHEBI:17996"/>
        <label>1</label>
    </ligand>
</feature>
<feature type="binding site" evidence="19">
    <location>
        <position position="589"/>
    </location>
    <ligand>
        <name>chloride</name>
        <dbReference type="ChEBI" id="CHEBI:17996"/>
        <label>2</label>
    </ligand>
</feature>
<feature type="binding site" evidence="8 24">
    <location>
        <position position="697"/>
    </location>
    <ligand>
        <name>ATP</name>
        <dbReference type="ChEBI" id="CHEBI:30616"/>
    </ligand>
</feature>
<feature type="binding site" evidence="8 24 25">
    <location>
        <position position="699"/>
    </location>
    <ligand>
        <name>ATP</name>
        <dbReference type="ChEBI" id="CHEBI:30616"/>
    </ligand>
</feature>
<feature type="binding site" evidence="8 26">
    <location>
        <position position="707"/>
    </location>
    <ligand>
        <name>ATP</name>
        <dbReference type="ChEBI" id="CHEBI:30616"/>
    </ligand>
</feature>
<feature type="binding site" evidence="8 24 25">
    <location>
        <position position="708"/>
    </location>
    <ligand>
        <name>ATP</name>
        <dbReference type="ChEBI" id="CHEBI:30616"/>
    </ligand>
</feature>
<feature type="binding site" evidence="8 24">
    <location>
        <position position="730"/>
    </location>
    <ligand>
        <name>ATP</name>
        <dbReference type="ChEBI" id="CHEBI:30616"/>
    </ligand>
</feature>
<feature type="binding site" evidence="8 25 26">
    <location>
        <position position="794"/>
    </location>
    <ligand>
        <name>ATP</name>
        <dbReference type="ChEBI" id="CHEBI:30616"/>
    </ligand>
</feature>
<feature type="binding site" evidence="8 26">
    <location>
        <position position="795"/>
    </location>
    <ligand>
        <name>ATP</name>
        <dbReference type="ChEBI" id="CHEBI:30616"/>
    </ligand>
</feature>
<feature type="binding site" evidence="8 26">
    <location>
        <position position="797"/>
    </location>
    <ligand>
        <name>ATP</name>
        <dbReference type="ChEBI" id="CHEBI:30616"/>
    </ligand>
</feature>
<feature type="modified residue" description="Phosphoserine" evidence="33">
    <location>
        <position position="24"/>
    </location>
</feature>
<feature type="modified residue" description="Phosphoserine" evidence="1">
    <location>
        <position position="47"/>
    </location>
</feature>
<feature type="modified residue" description="Phosphoserine" evidence="29 33">
    <location>
        <position position="51"/>
    </location>
</feature>
<feature type="modified residue" description="Phosphoserine" evidence="2">
    <location>
        <position position="81"/>
    </location>
</feature>
<feature type="modified residue" description="Phosphoserine" evidence="8 33 34">
    <location>
        <position position="88"/>
    </location>
</feature>
<feature type="modified residue" description="Phosphoserine" evidence="8">
    <location>
        <position position="734"/>
    </location>
</feature>
<feature type="modified residue" description="Phosphoserine" evidence="8">
    <location>
        <position position="916"/>
    </location>
</feature>
<feature type="modified residue" description="Phosphoserine" evidence="29 30 31 32 33">
    <location>
        <position position="967"/>
    </location>
</feature>
<feature type="modified residue" description="Phosphothreonine" evidence="33">
    <location>
        <position position="983"/>
    </location>
</feature>
<feature type="modified residue" description="Phosphoserine" evidence="8">
    <location>
        <position position="1050"/>
    </location>
</feature>
<feature type="glycosylation site" description="N-linked (GlcNAc...) asparagine" evidence="3">
    <location>
        <position position="245"/>
    </location>
</feature>
<feature type="glycosylation site" description="N-linked (GlcNAc...) asparagine" evidence="7 21 22 23">
    <location>
        <position position="312"/>
    </location>
</feature>
<feature type="glycosylation site" description="N-linked (GlcNAc...) asparagine" evidence="3">
    <location>
        <position position="331"/>
    </location>
</feature>
<feature type="glycosylation site" description="N-linked (GlcNAc...) asparagine" evidence="3">
    <location>
        <position position="347"/>
    </location>
</feature>
<feature type="glycosylation site" description="N-linked (GlcNAc...) asparagine" evidence="7">
    <location>
        <position position="361"/>
    </location>
</feature>
<feature type="disulfide bond" evidence="7 8 21 22 23 24 25 26 27 28">
    <location>
        <begin position="308"/>
        <end position="323"/>
    </location>
</feature>
<feature type="disulfide bond" evidence="7 8 21 22 23 24 25 26 27 28">
    <location>
        <begin position="343"/>
        <end position="353"/>
    </location>
</feature>
<feature type="splice variant" id="VSP_046369" description="In isoform 7." evidence="13">
    <original>MPHFTVVPVDGPRRGDYDNLEGLSWVDYGERAELDDSDGHGNHRESSPFLSPLEASRGIDYYDRNLALFE</original>
    <variation>MRAGGACRPGAAGTAAGTAAGGWDGGCGGAEPARCLTSPWCQWTGRGAATMTTSRGSVGWTTGSAPSWMTRT</variation>
    <location>
        <begin position="1"/>
        <end position="70"/>
    </location>
</feature>
<feature type="splice variant" id="VSP_044596" description="In isoform 5." evidence="13">
    <original>MPHFTVVPVDGPRRGDYDNLEGLSWVDYGERAELDDSD</original>
    <variation>MGDTLSP</variation>
    <location>
        <begin position="1"/>
        <end position="38"/>
    </location>
</feature>
<feature type="splice variant" id="VSP_046146" description="In isoform 6." evidence="13">
    <original>MPHFTVVPVDGPRRGDYDNLEGLSWVDYGERAELDDSD</original>
    <variation>MAAEGAVCGFVYLEGTAWAVPEDTEPLASCTL</variation>
    <location>
        <begin position="1"/>
        <end position="38"/>
    </location>
</feature>
<feature type="splice variant" id="VSP_006108" description="In isoform 4." evidence="12">
    <location>
        <begin position="749"/>
        <end position="955"/>
    </location>
</feature>
<feature type="splice variant" id="VSP_006109" description="In isoform 4." evidence="12">
    <original>RHS</original>
    <variation>PCA</variation>
    <location>
        <begin position="956"/>
        <end position="958"/>
    </location>
</feature>
<feature type="splice variant" id="VSP_006110" description="In isoform 4." evidence="12">
    <original>ESLYSDEEDESAVGADKIQMTWTRD</original>
    <variation>PTWPCSCPRTSPSTPATTSATWRAT</variation>
    <location>
        <begin position="963"/>
        <end position="987"/>
    </location>
</feature>
<feature type="splice variant" id="VSP_006111" description="In isoform 4." evidence="12">
    <location>
        <begin position="988"/>
        <end position="1085"/>
    </location>
</feature>
<feature type="splice variant" id="VSP_006112" description="In isoform 3." evidence="15">
    <location>
        <begin position="1012"/>
        <end position="1085"/>
    </location>
</feature>
<feature type="splice variant" id="VSP_006113" description="In isoform 2." evidence="15">
    <original>YMEFLEVLTEGLE</original>
    <variation>CIPLWRGRQLGGG</variation>
    <location>
        <begin position="1056"/>
        <end position="1068"/>
    </location>
</feature>
<feature type="splice variant" id="VSP_006114" description="In isoform 2." evidence="15">
    <location>
        <begin position="1069"/>
        <end position="1085"/>
    </location>
</feature>
<feature type="mutagenesis site" description="Decrease in Cl(-) efflux and reduced sensitivity to KCC inhibitor VU0463271." evidence="9">
    <original>V</original>
    <variation>A</variation>
    <location>
        <position position="135"/>
    </location>
</feature>
<feature type="mutagenesis site" description="Decrease in Cl(-) efflux." evidence="9">
    <original>I</original>
    <variation>A</variation>
    <location>
        <position position="136"/>
    </location>
</feature>
<feature type="mutagenesis site" description="Decrease in Cl(-) efflux." evidence="9">
    <original>L</original>
    <variation>A</variation>
    <location>
        <position position="139"/>
    </location>
</feature>
<feature type="mutagenesis site" description="Decrease in Cl(-) efflux." evidence="9">
    <original>R</original>
    <variation>Q</variation>
    <location>
        <position position="140"/>
    </location>
</feature>
<feature type="mutagenesis site" description="Decrease in Cl(-) efflux and reduced sensitivity to KCC inhibitor VU0463271." evidence="9">
    <original>M</original>
    <variation>A</variation>
    <location>
        <position position="215"/>
    </location>
</feature>
<feature type="mutagenesis site" description="Decrease in Cl(-) efflux and reduced sensitivity to KCC inhibitor VU0463271." evidence="9">
    <original>E</original>
    <variation>A</variation>
    <location>
        <position position="222"/>
    </location>
</feature>
<feature type="mutagenesis site" description="Decrease in Cl(-) efflux and reduced sensitivity to KCC inhibitor VU0463271." evidence="9">
    <original>I</original>
    <variation>A</variation>
    <location>
        <position position="223"/>
    </location>
</feature>
<feature type="mutagenesis site" description="Decrease in Cl(-) efflux." evidence="9">
    <original>L</original>
    <variation>A</variation>
    <location>
        <position position="574"/>
    </location>
</feature>
<feature type="mutagenesis site" description="Decrease in Cl(-) efflux." evidence="9">
    <original>D</original>
    <variation>A</variation>
    <location>
        <position position="575"/>
    </location>
</feature>
<feature type="mutagenesis site" description="Reduced sensitivity to KCC inhibitor VU0463271." evidence="9">
    <original>L</original>
    <variation>A</variation>
    <location>
        <position position="581"/>
    </location>
</feature>
<feature type="sequence conflict" description="In Ref. 3; BAG61116." evidence="16" ref="3">
    <original>N</original>
    <variation>D</variation>
    <location>
        <position position="42"/>
    </location>
</feature>
<feature type="sequence conflict" description="In Ref. 3; BAG63994." evidence="16" ref="3">
    <original>F</original>
    <variation>L</variation>
    <location>
        <position position="211"/>
    </location>
</feature>
<feature type="sequence conflict" description="In Ref. 3; BAG63994." evidence="16" ref="3">
    <original>I</original>
    <variation>N</variation>
    <location>
        <position position="288"/>
    </location>
</feature>
<feature type="sequence conflict" description="In Ref. 3; BAG57330." evidence="16" ref="3">
    <original>G</original>
    <variation>R</variation>
    <location>
        <position position="370"/>
    </location>
</feature>
<feature type="sequence conflict" description="In Ref. 3; BAG63994." evidence="16" ref="3">
    <original>L</original>
    <variation>P</variation>
    <location>
        <position position="697"/>
    </location>
</feature>
<feature type="sequence conflict" description="In Ref. 3; BAG57330." evidence="16" ref="3">
    <original>V</original>
    <variation>A</variation>
    <location>
        <position position="1016"/>
    </location>
</feature>
<feature type="sequence conflict" description="In Ref. 3; BAG57330." evidence="16" ref="3">
    <original>N</original>
    <variation>D</variation>
    <location>
        <position position="1055"/>
    </location>
</feature>
<feature type="helix" evidence="35">
    <location>
        <begin position="120"/>
        <end position="123"/>
    </location>
</feature>
<feature type="helix" evidence="35">
    <location>
        <begin position="125"/>
        <end position="132"/>
    </location>
</feature>
<feature type="helix" evidence="35">
    <location>
        <begin position="136"/>
        <end position="139"/>
    </location>
</feature>
<feature type="helix" evidence="35">
    <location>
        <begin position="141"/>
        <end position="175"/>
    </location>
</feature>
<feature type="helix" evidence="35">
    <location>
        <begin position="186"/>
        <end position="193"/>
    </location>
</feature>
<feature type="helix" evidence="35">
    <location>
        <begin position="195"/>
        <end position="226"/>
    </location>
</feature>
<feature type="turn" evidence="38">
    <location>
        <begin position="230"/>
        <end position="232"/>
    </location>
</feature>
<feature type="helix" evidence="38">
    <location>
        <begin position="233"/>
        <end position="235"/>
    </location>
</feature>
<feature type="strand" evidence="35">
    <location>
        <begin position="239"/>
        <end position="241"/>
    </location>
</feature>
<feature type="helix" evidence="35">
    <location>
        <begin position="245"/>
        <end position="268"/>
    </location>
</feature>
<feature type="helix" evidence="35">
    <location>
        <begin position="270"/>
        <end position="275"/>
    </location>
</feature>
<feature type="turn" evidence="35">
    <location>
        <begin position="276"/>
        <end position="278"/>
    </location>
</feature>
<feature type="helix" evidence="35">
    <location>
        <begin position="279"/>
        <end position="300"/>
    </location>
</feature>
<feature type="strand" evidence="35">
    <location>
        <begin position="306"/>
        <end position="310"/>
    </location>
</feature>
<feature type="strand" evidence="36">
    <location>
        <begin position="313"/>
        <end position="315"/>
    </location>
</feature>
<feature type="turn" evidence="35">
    <location>
        <begin position="317"/>
        <end position="319"/>
    </location>
</feature>
<feature type="strand" evidence="35">
    <location>
        <begin position="325"/>
        <end position="329"/>
    </location>
</feature>
<feature type="strand" evidence="35">
    <location>
        <begin position="332"/>
        <end position="335"/>
    </location>
</feature>
<feature type="helix" evidence="35">
    <location>
        <begin position="337"/>
        <end position="343"/>
    </location>
</feature>
<feature type="strand" evidence="35">
    <location>
        <begin position="344"/>
        <end position="346"/>
    </location>
</feature>
<feature type="strand" evidence="38">
    <location>
        <begin position="347"/>
        <end position="349"/>
    </location>
</feature>
<feature type="helix" evidence="35">
    <location>
        <begin position="355"/>
        <end position="359"/>
    </location>
</feature>
<feature type="strand" evidence="35">
    <location>
        <begin position="362"/>
        <end position="367"/>
    </location>
</feature>
<feature type="helix" evidence="35">
    <location>
        <begin position="373"/>
        <end position="378"/>
    </location>
</feature>
<feature type="strand" evidence="35">
    <location>
        <begin position="394"/>
        <end position="396"/>
    </location>
</feature>
<feature type="helix" evidence="35">
    <location>
        <begin position="405"/>
        <end position="407"/>
    </location>
</feature>
<feature type="helix" evidence="36">
    <location>
        <begin position="408"/>
        <end position="410"/>
    </location>
</feature>
<feature type="helix" evidence="35">
    <location>
        <begin position="420"/>
        <end position="427"/>
    </location>
</feature>
<feature type="helix" evidence="35">
    <location>
        <begin position="428"/>
        <end position="430"/>
    </location>
</feature>
<feature type="helix" evidence="35">
    <location>
        <begin position="435"/>
        <end position="437"/>
    </location>
</feature>
<feature type="turn" evidence="35">
    <location>
        <begin position="439"/>
        <end position="443"/>
    </location>
</feature>
<feature type="helix" evidence="35">
    <location>
        <begin position="447"/>
        <end position="476"/>
    </location>
</feature>
<feature type="helix" evidence="35">
    <location>
        <begin position="479"/>
        <end position="482"/>
    </location>
</feature>
<feature type="helix" evidence="35">
    <location>
        <begin position="485"/>
        <end position="487"/>
    </location>
</feature>
<feature type="turn" evidence="35">
    <location>
        <begin position="488"/>
        <end position="492"/>
    </location>
</feature>
<feature type="helix" evidence="35">
    <location>
        <begin position="497"/>
        <end position="499"/>
    </location>
</feature>
<feature type="strand" evidence="38">
    <location>
        <begin position="500"/>
        <end position="502"/>
    </location>
</feature>
<feature type="helix" evidence="35">
    <location>
        <begin position="505"/>
        <end position="535"/>
    </location>
</feature>
<feature type="turn" evidence="38">
    <location>
        <begin position="536"/>
        <end position="538"/>
    </location>
</feature>
<feature type="helix" evidence="35">
    <location>
        <begin position="540"/>
        <end position="546"/>
    </location>
</feature>
<feature type="strand" evidence="35">
    <location>
        <begin position="550"/>
        <end position="552"/>
    </location>
</feature>
<feature type="helix" evidence="35">
    <location>
        <begin position="556"/>
        <end position="569"/>
    </location>
</feature>
<feature type="helix" evidence="35">
    <location>
        <begin position="574"/>
        <end position="601"/>
    </location>
</feature>
<feature type="helix" evidence="35">
    <location>
        <begin position="616"/>
        <end position="633"/>
    </location>
</feature>
<feature type="helix" evidence="35">
    <location>
        <begin position="635"/>
        <end position="651"/>
    </location>
</feature>
<feature type="strand" evidence="37">
    <location>
        <begin position="661"/>
        <end position="664"/>
    </location>
</feature>
<feature type="helix" evidence="36">
    <location>
        <begin position="665"/>
        <end position="681"/>
    </location>
</feature>
<feature type="strand" evidence="36">
    <location>
        <begin position="694"/>
        <end position="697"/>
    </location>
</feature>
<feature type="helix" evidence="36">
    <location>
        <begin position="710"/>
        <end position="719"/>
    </location>
</feature>
<feature type="strand" evidence="36">
    <location>
        <begin position="725"/>
        <end position="733"/>
    </location>
</feature>
<feature type="helix" evidence="36">
    <location>
        <begin position="735"/>
        <end position="737"/>
    </location>
</feature>
<feature type="helix" evidence="36">
    <location>
        <begin position="740"/>
        <end position="755"/>
    </location>
</feature>
<feature type="strand" evidence="36">
    <location>
        <begin position="761"/>
        <end position="769"/>
    </location>
</feature>
<feature type="helix" evidence="36">
    <location>
        <begin position="770"/>
        <end position="779"/>
    </location>
</feature>
<feature type="strand" evidence="36">
    <location>
        <begin position="790"/>
        <end position="792"/>
    </location>
</feature>
<feature type="turn" evidence="36">
    <location>
        <begin position="797"/>
        <end position="801"/>
    </location>
</feature>
<feature type="helix" evidence="36">
    <location>
        <begin position="806"/>
        <end position="819"/>
    </location>
</feature>
<feature type="turn" evidence="36">
    <location>
        <begin position="820"/>
        <end position="822"/>
    </location>
</feature>
<feature type="strand" evidence="36">
    <location>
        <begin position="824"/>
        <end position="830"/>
    </location>
</feature>
<feature type="helix" evidence="36">
    <location>
        <begin position="831"/>
        <end position="833"/>
    </location>
</feature>
<feature type="strand" evidence="36">
    <location>
        <begin position="845"/>
        <end position="848"/>
    </location>
</feature>
<feature type="helix" evidence="36">
    <location>
        <begin position="855"/>
        <end position="866"/>
    </location>
</feature>
<feature type="helix" evidence="36">
    <location>
        <begin position="869"/>
        <end position="871"/>
    </location>
</feature>
<feature type="strand" evidence="36">
    <location>
        <begin position="875"/>
        <end position="880"/>
    </location>
</feature>
<feature type="helix" evidence="36">
    <location>
        <begin position="888"/>
        <end position="902"/>
    </location>
</feature>
<feature type="strand" evidence="36">
    <location>
        <begin position="907"/>
        <end position="910"/>
    </location>
</feature>
<feature type="turn" evidence="36">
    <location>
        <begin position="915"/>
        <end position="918"/>
    </location>
</feature>
<feature type="helix" evidence="36">
    <location>
        <begin position="919"/>
        <end position="925"/>
    </location>
</feature>
<feature type="helix" evidence="36">
    <location>
        <begin position="1015"/>
        <end position="1032"/>
    </location>
</feature>
<feature type="strand" evidence="36">
    <location>
        <begin position="1039"/>
        <end position="1042"/>
    </location>
</feature>
<feature type="turn" evidence="36">
    <location>
        <begin position="1050"/>
        <end position="1052"/>
    </location>
</feature>
<feature type="helix" evidence="36">
    <location>
        <begin position="1053"/>
        <end position="1063"/>
    </location>
</feature>
<feature type="strand" evidence="36">
    <location>
        <begin position="1068"/>
        <end position="1074"/>
    </location>
</feature>
<feature type="sequence conflict" description="In Ref. 3; BAH14786." evidence="16" ref="3">
    <original>E</original>
    <variation>G</variation>
    <location sequence="Q9UP95-6">
        <position position="4"/>
    </location>
</feature>
<protein>
    <recommendedName>
        <fullName evidence="16">Solute carrier family 12 member 4</fullName>
    </recommendedName>
    <alternativeName>
        <fullName>Electroneutral potassium-chloride cotransporter 1</fullName>
    </alternativeName>
    <alternativeName>
        <fullName evidence="15">Erythroid K-Cl cotransporter 1</fullName>
        <shortName evidence="15">hKCC1</shortName>
    </alternativeName>
</protein>
<evidence type="ECO:0000250" key="1">
    <source>
        <dbReference type="UniProtKB" id="Q9JIS8"/>
    </source>
</evidence>
<evidence type="ECO:0000250" key="2">
    <source>
        <dbReference type="UniProtKB" id="Q9UHW9"/>
    </source>
</evidence>
<evidence type="ECO:0000255" key="3"/>
<evidence type="ECO:0000269" key="4">
    <source>
    </source>
</evidence>
<evidence type="ECO:0000269" key="5">
    <source>
    </source>
</evidence>
<evidence type="ECO:0000269" key="6">
    <source>
    </source>
</evidence>
<evidence type="ECO:0000269" key="7">
    <source>
    </source>
</evidence>
<evidence type="ECO:0000269" key="8">
    <source>
    </source>
</evidence>
<evidence type="ECO:0000269" key="9">
    <source>
    </source>
</evidence>
<evidence type="ECO:0000269" key="10">
    <source>
    </source>
</evidence>
<evidence type="ECO:0000269" key="11">
    <source>
    </source>
</evidence>
<evidence type="ECO:0000303" key="12">
    <source>
    </source>
</evidence>
<evidence type="ECO:0000303" key="13">
    <source>
    </source>
</evidence>
<evidence type="ECO:0000303" key="14">
    <source>
    </source>
</evidence>
<evidence type="ECO:0000303" key="15">
    <source>
    </source>
</evidence>
<evidence type="ECO:0000305" key="16"/>
<evidence type="ECO:0000305" key="17">
    <source>
    </source>
</evidence>
<evidence type="ECO:0000305" key="18">
    <source>
    </source>
</evidence>
<evidence type="ECO:0000305" key="19">
    <source>
    </source>
</evidence>
<evidence type="ECO:0000312" key="20">
    <source>
        <dbReference type="HGNC" id="HGNC:10913"/>
    </source>
</evidence>
<evidence type="ECO:0007744" key="21">
    <source>
        <dbReference type="PDB" id="6KKR"/>
    </source>
</evidence>
<evidence type="ECO:0007744" key="22">
    <source>
        <dbReference type="PDB" id="6KKT"/>
    </source>
</evidence>
<evidence type="ECO:0007744" key="23">
    <source>
        <dbReference type="PDB" id="6KKU"/>
    </source>
</evidence>
<evidence type="ECO:0007744" key="24">
    <source>
        <dbReference type="PDB" id="7AIP"/>
    </source>
</evidence>
<evidence type="ECO:0007744" key="25">
    <source>
        <dbReference type="PDB" id="7AIQ"/>
    </source>
</evidence>
<evidence type="ECO:0007744" key="26">
    <source>
        <dbReference type="PDB" id="7AIR"/>
    </source>
</evidence>
<evidence type="ECO:0007744" key="27">
    <source>
        <dbReference type="PDB" id="7TTH"/>
    </source>
</evidence>
<evidence type="ECO:0007744" key="28">
    <source>
        <dbReference type="PDB" id="7TTI"/>
    </source>
</evidence>
<evidence type="ECO:0007744" key="29">
    <source>
    </source>
</evidence>
<evidence type="ECO:0007744" key="30">
    <source>
    </source>
</evidence>
<evidence type="ECO:0007744" key="31">
    <source>
    </source>
</evidence>
<evidence type="ECO:0007744" key="32">
    <source>
    </source>
</evidence>
<evidence type="ECO:0007744" key="33">
    <source>
    </source>
</evidence>
<evidence type="ECO:0007744" key="34">
    <source>
    </source>
</evidence>
<evidence type="ECO:0007829" key="35">
    <source>
        <dbReference type="PDB" id="6KKR"/>
    </source>
</evidence>
<evidence type="ECO:0007829" key="36">
    <source>
        <dbReference type="PDB" id="7AIP"/>
    </source>
</evidence>
<evidence type="ECO:0007829" key="37">
    <source>
        <dbReference type="PDB" id="7TTH"/>
    </source>
</evidence>
<evidence type="ECO:0007829" key="38">
    <source>
        <dbReference type="PDB" id="7TTI"/>
    </source>
</evidence>
<sequence>MPHFTVVPVDGPRRGDYDNLEGLSWVDYGERAELDDSDGHGNHRESSPFLSPLEASRGIDYYDRNLALFEEELDIRPKVSSLLGKLVSYTNLTQGAKEHEEAESGEGTRRRAAEAPSMGTLMGVYLPCLQNIFGVILFLRLTWMVGTAGVLQALLIVLICCCCTLLTAISMSAIATNGVVPAGGSYFMISRSLGPEFGGAVGLCFYLGTTFAAAMYILGAIEILLTYIAPPAAIFYPSGAHDTSNATLNNMRVYGTIFLTFMTLVVFVGVKYVNKFASLFLACVIISILSIYAGGIKSIFDPPVFPVCMLGNRTLSRDQFDICAKTAVVDNETVATQLWSFFCHSPNLTTDSCDPYFMLNNVTEIPGIPGAAAGVLQENLWSAYLEKGDIVEKHGLPSADAPSLKESLPLYVVADIATSFTVLVGIFFPSVTGIMAGSNRSGDLRDAQKSIPVGTILAIITTSLVYFSSVVLFGACIEGVVLRDKYGDGVSRNLVVGTLAWPSPWVIVIGSFFSTCGAGLQSLTGAPRLLQAIAKDNIIPFLRVFGHGKVNGEPTWALLLTALIAELGILIASLDMVAPILSMFFLMCYLFVNLACAVQTLLRTPNWRPRFKYYHWALSFLGMSLCLALMFVSSWYYALVAMLIAGMIYKYIEYQGAEKEWGDGIRGLSLSAARYALLRLEEGPPHTKNWRPQLLVLLKLDEDLHVKYPRLLTFASQLKAGKGLTIVGSVIQGSFLESYGEAQAAEQTIKNMMEIEKVKGFCQVVVASKVREGLAHLIQSCGLGGMRHNSVVLGWPYGWRQSEDPRAWKTFIDTVRCTTAAHLALLVPKNIAFYPSNHERYLEGHIDVWWIVHDGGMLMLLPFLLRQHKVWRKCRMRIFTVAQMDDNSIQMKKDLAVFLYHLRLEAEVEVVEMHNSDISAYTYERTLMMEQRSQMLRQMRLTKTEREREAQLVKDRHSALRLESLYSDEEDESAVGADKIQMTWTRDKYMTETWDPSHAPDNFRELVHIKPDQSNVRRMHTAVKLNEVIVTRSHDARLVLLNMPGPPRNSEGDENYMEFLEVLTEGLERVLLVRGGGREVITIYS</sequence>
<name>S12A4_HUMAN</name>
<proteinExistence type="evidence at protein level"/>
<reference key="1">
    <citation type="journal article" date="1996" name="J. Biol. Chem.">
        <title>Molecular cloning and functional expression of the K-Cl cotransporter from rabbit, rat, and human. A new member of the cation-chloride cotransporter family.</title>
        <authorList>
            <person name="Gillen C.M."/>
            <person name="Brill S."/>
            <person name="Payne J.A."/>
            <person name="Forbush B. III"/>
        </authorList>
    </citation>
    <scope>NUCLEOTIDE SEQUENCE [MRNA] (ISOFORM 1)</scope>
    <scope>TISSUE SPECIFICITY</scope>
    <source>
        <tissue>Embryonic kidney</tissue>
    </source>
</reference>
<reference key="2">
    <citation type="journal article" date="1998" name="Blood Cells Mol. Dis.">
        <title>Molecular identification and expression of erythroid K:Cl cotransporter in human and mouse erythroleukemic cells.</title>
        <authorList>
            <person name="Pellegrino C.M."/>
            <person name="Rybicki A.C."/>
            <person name="Musto S."/>
            <person name="Nagel R.L."/>
            <person name="Schwartz R.S."/>
        </authorList>
    </citation>
    <scope>NUCLEOTIDE SEQUENCE [MRNA] (ISOFORMS 1; 2 AND 3)</scope>
    <scope>TISSUE SPECIFICITY</scope>
    <source>
        <tissue>Erythroleukemia</tissue>
    </source>
</reference>
<reference key="3">
    <citation type="journal article" date="2004" name="Nat. Genet.">
        <title>Complete sequencing and characterization of 21,243 full-length human cDNAs.</title>
        <authorList>
            <person name="Ota T."/>
            <person name="Suzuki Y."/>
            <person name="Nishikawa T."/>
            <person name="Otsuki T."/>
            <person name="Sugiyama T."/>
            <person name="Irie R."/>
            <person name="Wakamatsu A."/>
            <person name="Hayashi K."/>
            <person name="Sato H."/>
            <person name="Nagai K."/>
            <person name="Kimura K."/>
            <person name="Makita H."/>
            <person name="Sekine M."/>
            <person name="Obayashi M."/>
            <person name="Nishi T."/>
            <person name="Shibahara T."/>
            <person name="Tanaka T."/>
            <person name="Ishii S."/>
            <person name="Yamamoto J."/>
            <person name="Saito K."/>
            <person name="Kawai Y."/>
            <person name="Isono Y."/>
            <person name="Nakamura Y."/>
            <person name="Nagahari K."/>
            <person name="Murakami K."/>
            <person name="Yasuda T."/>
            <person name="Iwayanagi T."/>
            <person name="Wagatsuma M."/>
            <person name="Shiratori A."/>
            <person name="Sudo H."/>
            <person name="Hosoiri T."/>
            <person name="Kaku Y."/>
            <person name="Kodaira H."/>
            <person name="Kondo H."/>
            <person name="Sugawara M."/>
            <person name="Takahashi M."/>
            <person name="Kanda K."/>
            <person name="Yokoi T."/>
            <person name="Furuya T."/>
            <person name="Kikkawa E."/>
            <person name="Omura Y."/>
            <person name="Abe K."/>
            <person name="Kamihara K."/>
            <person name="Katsuta N."/>
            <person name="Sato K."/>
            <person name="Tanikawa M."/>
            <person name="Yamazaki M."/>
            <person name="Ninomiya K."/>
            <person name="Ishibashi T."/>
            <person name="Yamashita H."/>
            <person name="Murakawa K."/>
            <person name="Fujimori K."/>
            <person name="Tanai H."/>
            <person name="Kimata M."/>
            <person name="Watanabe M."/>
            <person name="Hiraoka S."/>
            <person name="Chiba Y."/>
            <person name="Ishida S."/>
            <person name="Ono Y."/>
            <person name="Takiguchi S."/>
            <person name="Watanabe S."/>
            <person name="Yosida M."/>
            <person name="Hotuta T."/>
            <person name="Kusano J."/>
            <person name="Kanehori K."/>
            <person name="Takahashi-Fujii A."/>
            <person name="Hara H."/>
            <person name="Tanase T.-O."/>
            <person name="Nomura Y."/>
            <person name="Togiya S."/>
            <person name="Komai F."/>
            <person name="Hara R."/>
            <person name="Takeuchi K."/>
            <person name="Arita M."/>
            <person name="Imose N."/>
            <person name="Musashino K."/>
            <person name="Yuuki H."/>
            <person name="Oshima A."/>
            <person name="Sasaki N."/>
            <person name="Aotsuka S."/>
            <person name="Yoshikawa Y."/>
            <person name="Matsunawa H."/>
            <person name="Ichihara T."/>
            <person name="Shiohata N."/>
            <person name="Sano S."/>
            <person name="Moriya S."/>
            <person name="Momiyama H."/>
            <person name="Satoh N."/>
            <person name="Takami S."/>
            <person name="Terashima Y."/>
            <person name="Suzuki O."/>
            <person name="Nakagawa S."/>
            <person name="Senoh A."/>
            <person name="Mizoguchi H."/>
            <person name="Goto Y."/>
            <person name="Shimizu F."/>
            <person name="Wakebe H."/>
            <person name="Hishigaki H."/>
            <person name="Watanabe T."/>
            <person name="Sugiyama A."/>
            <person name="Takemoto M."/>
            <person name="Kawakami B."/>
            <person name="Yamazaki M."/>
            <person name="Watanabe K."/>
            <person name="Kumagai A."/>
            <person name="Itakura S."/>
            <person name="Fukuzumi Y."/>
            <person name="Fujimori Y."/>
            <person name="Komiyama M."/>
            <person name="Tashiro H."/>
            <person name="Tanigami A."/>
            <person name="Fujiwara T."/>
            <person name="Ono T."/>
            <person name="Yamada K."/>
            <person name="Fujii Y."/>
            <person name="Ozaki K."/>
            <person name="Hirao M."/>
            <person name="Ohmori Y."/>
            <person name="Kawabata A."/>
            <person name="Hikiji T."/>
            <person name="Kobatake N."/>
            <person name="Inagaki H."/>
            <person name="Ikema Y."/>
            <person name="Okamoto S."/>
            <person name="Okitani R."/>
            <person name="Kawakami T."/>
            <person name="Noguchi S."/>
            <person name="Itoh T."/>
            <person name="Shigeta K."/>
            <person name="Senba T."/>
            <person name="Matsumura K."/>
            <person name="Nakajima Y."/>
            <person name="Mizuno T."/>
            <person name="Morinaga M."/>
            <person name="Sasaki M."/>
            <person name="Togashi T."/>
            <person name="Oyama M."/>
            <person name="Hata H."/>
            <person name="Watanabe M."/>
            <person name="Komatsu T."/>
            <person name="Mizushima-Sugano J."/>
            <person name="Satoh T."/>
            <person name="Shirai Y."/>
            <person name="Takahashi Y."/>
            <person name="Nakagawa K."/>
            <person name="Okumura K."/>
            <person name="Nagase T."/>
            <person name="Nomura N."/>
            <person name="Kikuchi H."/>
            <person name="Masuho Y."/>
            <person name="Yamashita R."/>
            <person name="Nakai K."/>
            <person name="Yada T."/>
            <person name="Nakamura Y."/>
            <person name="Ohara O."/>
            <person name="Isogai T."/>
            <person name="Sugano S."/>
        </authorList>
    </citation>
    <scope>NUCLEOTIDE SEQUENCE [LARGE SCALE MRNA] (ISOFORMS 5 AND 6)</scope>
    <scope>NUCLEOTIDE SEQUENCE [LARGE SCALE MRNA] OF 25-1087 (ISOFORM 7)</scope>
    <source>
        <tissue>Cerebellum</tissue>
        <tissue>Testis</tissue>
    </source>
</reference>
<reference key="4">
    <citation type="journal article" date="2004" name="Nature">
        <title>The sequence and analysis of duplication-rich human chromosome 16.</title>
        <authorList>
            <person name="Martin J."/>
            <person name="Han C."/>
            <person name="Gordon L.A."/>
            <person name="Terry A."/>
            <person name="Prabhakar S."/>
            <person name="She X."/>
            <person name="Xie G."/>
            <person name="Hellsten U."/>
            <person name="Chan Y.M."/>
            <person name="Altherr M."/>
            <person name="Couronne O."/>
            <person name="Aerts A."/>
            <person name="Bajorek E."/>
            <person name="Black S."/>
            <person name="Blumer H."/>
            <person name="Branscomb E."/>
            <person name="Brown N.C."/>
            <person name="Bruno W.J."/>
            <person name="Buckingham J.M."/>
            <person name="Callen D.F."/>
            <person name="Campbell C.S."/>
            <person name="Campbell M.L."/>
            <person name="Campbell E.W."/>
            <person name="Caoile C."/>
            <person name="Challacombe J.F."/>
            <person name="Chasteen L.A."/>
            <person name="Chertkov O."/>
            <person name="Chi H.C."/>
            <person name="Christensen M."/>
            <person name="Clark L.M."/>
            <person name="Cohn J.D."/>
            <person name="Denys M."/>
            <person name="Detter J.C."/>
            <person name="Dickson M."/>
            <person name="Dimitrijevic-Bussod M."/>
            <person name="Escobar J."/>
            <person name="Fawcett J.J."/>
            <person name="Flowers D."/>
            <person name="Fotopulos D."/>
            <person name="Glavina T."/>
            <person name="Gomez M."/>
            <person name="Gonzales E."/>
            <person name="Goodstein D."/>
            <person name="Goodwin L.A."/>
            <person name="Grady D.L."/>
            <person name="Grigoriev I."/>
            <person name="Groza M."/>
            <person name="Hammon N."/>
            <person name="Hawkins T."/>
            <person name="Haydu L."/>
            <person name="Hildebrand C.E."/>
            <person name="Huang W."/>
            <person name="Israni S."/>
            <person name="Jett J."/>
            <person name="Jewett P.B."/>
            <person name="Kadner K."/>
            <person name="Kimball H."/>
            <person name="Kobayashi A."/>
            <person name="Krawczyk M.-C."/>
            <person name="Leyba T."/>
            <person name="Longmire J.L."/>
            <person name="Lopez F."/>
            <person name="Lou Y."/>
            <person name="Lowry S."/>
            <person name="Ludeman T."/>
            <person name="Manohar C.F."/>
            <person name="Mark G.A."/>
            <person name="McMurray K.L."/>
            <person name="Meincke L.J."/>
            <person name="Morgan J."/>
            <person name="Moyzis R.K."/>
            <person name="Mundt M.O."/>
            <person name="Munk A.C."/>
            <person name="Nandkeshwar R.D."/>
            <person name="Pitluck S."/>
            <person name="Pollard M."/>
            <person name="Predki P."/>
            <person name="Parson-Quintana B."/>
            <person name="Ramirez L."/>
            <person name="Rash S."/>
            <person name="Retterer J."/>
            <person name="Ricke D.O."/>
            <person name="Robinson D.L."/>
            <person name="Rodriguez A."/>
            <person name="Salamov A."/>
            <person name="Saunders E.H."/>
            <person name="Scott D."/>
            <person name="Shough T."/>
            <person name="Stallings R.L."/>
            <person name="Stalvey M."/>
            <person name="Sutherland R.D."/>
            <person name="Tapia R."/>
            <person name="Tesmer J.G."/>
            <person name="Thayer N."/>
            <person name="Thompson L.S."/>
            <person name="Tice H."/>
            <person name="Torney D.C."/>
            <person name="Tran-Gyamfi M."/>
            <person name="Tsai M."/>
            <person name="Ulanovsky L.E."/>
            <person name="Ustaszewska A."/>
            <person name="Vo N."/>
            <person name="White P.S."/>
            <person name="Williams A.L."/>
            <person name="Wills P.L."/>
            <person name="Wu J.-R."/>
            <person name="Wu K."/>
            <person name="Yang J."/>
            <person name="DeJong P."/>
            <person name="Bruce D."/>
            <person name="Doggett N.A."/>
            <person name="Deaven L."/>
            <person name="Schmutz J."/>
            <person name="Grimwood J."/>
            <person name="Richardson P."/>
            <person name="Rokhsar D.S."/>
            <person name="Eichler E.E."/>
            <person name="Gilna P."/>
            <person name="Lucas S.M."/>
            <person name="Myers R.M."/>
            <person name="Rubin E.M."/>
            <person name="Pennacchio L.A."/>
        </authorList>
    </citation>
    <scope>NUCLEOTIDE SEQUENCE [LARGE SCALE GENOMIC DNA]</scope>
</reference>
<reference key="5">
    <citation type="journal article" date="2004" name="Genome Res.">
        <title>The status, quality, and expansion of the NIH full-length cDNA project: the Mammalian Gene Collection (MGC).</title>
        <authorList>
            <consortium name="The MGC Project Team"/>
        </authorList>
    </citation>
    <scope>NUCLEOTIDE SEQUENCE [LARGE SCALE MRNA] (ISOFORM 1)</scope>
    <source>
        <tissue>Eye</tissue>
    </source>
</reference>
<reference key="6">
    <citation type="submission" date="1998-03" db="EMBL/GenBank/DDBJ databases">
        <authorList>
            <person name="Golding S."/>
            <person name="Culliford S.J."/>
            <person name="Ellory J.C."/>
        </authorList>
    </citation>
    <scope>NUCLEOTIDE SEQUENCE [MRNA] OF 280-517</scope>
    <source>
        <tissue>Erythroleukemia</tissue>
    </source>
</reference>
<reference key="7">
    <citation type="journal article" date="2001" name="J. Biol. Chem.">
        <title>A dominant negative mutant of the KCC1 K-Cl cotransporter: both N- and C-terminal cytoplasmic domains are required for K-Cl cotransport activity.</title>
        <authorList>
            <person name="Casula S."/>
            <person name="Shmukler B.E."/>
            <person name="Wilhelm S."/>
            <person name="Stuart-Tilley A.K."/>
            <person name="Su W."/>
            <person name="Chernova M.N."/>
            <person name="Brugnara C."/>
            <person name="Alper S.L."/>
        </authorList>
    </citation>
    <scope>NUCLEOTIDE SEQUENCE [MRNA] OF 684-1085 (ISOFORM 4)</scope>
    <scope>SUBUNIT</scope>
    <scope>FUNCTION (ISOFORM 4)</scope>
</reference>
<reference key="8">
    <citation type="journal article" date="2000" name="J. Biol. Chem.">
        <title>Functional comparison of the K+-Cl- cotransporters KCC1 and KCC4.</title>
        <authorList>
            <person name="Mercado A."/>
            <person name="Song L."/>
            <person name="Vazquez N."/>
            <person name="Mount D.B."/>
            <person name="Gamba G."/>
        </authorList>
    </citation>
    <scope>FUNCTION</scope>
    <scope>TRANSPORTER ACTIVITY</scope>
    <scope>BIOPHYSICOCHEMICAL PROPERTIES</scope>
    <scope>SUBCELLULAR LOCATION</scope>
</reference>
<reference key="9">
    <citation type="journal article" date="1999" name="Am. J. Physiol.">
        <title>Mouse K-Cl cotransporter KCC1: cloning, mapping, pathological expression, and functional regulation.</title>
        <authorList>
            <person name="Su W."/>
            <person name="Shmukler B.E."/>
            <person name="Chernova M.N."/>
            <person name="Stuart-Tilley A.K."/>
            <person name="de Franceschi L."/>
            <person name="Brugnara C."/>
            <person name="Alper S.L."/>
        </authorList>
    </citation>
    <scope>EXPRESSION IN ERYTHROCYTE MEMBRANES</scope>
</reference>
<reference key="10">
    <citation type="journal article" date="2008" name="Proc. Natl. Acad. Sci. U.S.A.">
        <title>A quantitative atlas of mitotic phosphorylation.</title>
        <authorList>
            <person name="Dephoure N."/>
            <person name="Zhou C."/>
            <person name="Villen J."/>
            <person name="Beausoleil S.A."/>
            <person name="Bakalarski C.E."/>
            <person name="Elledge S.J."/>
            <person name="Gygi S.P."/>
        </authorList>
    </citation>
    <scope>PHOSPHORYLATION [LARGE SCALE ANALYSIS] AT SER-51 AND SER-967</scope>
    <scope>IDENTIFICATION BY MASS SPECTROMETRY [LARGE SCALE ANALYSIS]</scope>
    <source>
        <tissue>Cervix carcinoma</tissue>
    </source>
</reference>
<reference key="11">
    <citation type="journal article" date="2009" name="Sci. Signal.">
        <title>Quantitative phosphoproteomic analysis of T cell receptor signaling reveals system-wide modulation of protein-protein interactions.</title>
        <authorList>
            <person name="Mayya V."/>
            <person name="Lundgren D.H."/>
            <person name="Hwang S.-I."/>
            <person name="Rezaul K."/>
            <person name="Wu L."/>
            <person name="Eng J.K."/>
            <person name="Rodionov V."/>
            <person name="Han D.K."/>
        </authorList>
    </citation>
    <scope>PHOSPHORYLATION [LARGE SCALE ANALYSIS] AT SER-967</scope>
    <scope>IDENTIFICATION BY MASS SPECTROMETRY [LARGE SCALE ANALYSIS]</scope>
    <source>
        <tissue>Leukemic T-cell</tissue>
    </source>
</reference>
<reference key="12">
    <citation type="journal article" date="2010" name="Sci. Signal.">
        <title>Quantitative phosphoproteomics reveals widespread full phosphorylation site occupancy during mitosis.</title>
        <authorList>
            <person name="Olsen J.V."/>
            <person name="Vermeulen M."/>
            <person name="Santamaria A."/>
            <person name="Kumar C."/>
            <person name="Miller M.L."/>
            <person name="Jensen L.J."/>
            <person name="Gnad F."/>
            <person name="Cox J."/>
            <person name="Jensen T.S."/>
            <person name="Nigg E.A."/>
            <person name="Brunak S."/>
            <person name="Mann M."/>
        </authorList>
    </citation>
    <scope>PHOSPHORYLATION [LARGE SCALE ANALYSIS] AT SER-967</scope>
    <scope>IDENTIFICATION BY MASS SPECTROMETRY [LARGE SCALE ANALYSIS]</scope>
    <source>
        <tissue>Cervix carcinoma</tissue>
    </source>
</reference>
<reference key="13">
    <citation type="journal article" date="2011" name="Am. J. Physiol.">
        <title>Similar Effects of all WNK3 Variants upon SLC12 Cotransporters.</title>
        <authorList>
            <person name="Cruz-Rangel S."/>
            <person name="Melo Z."/>
            <person name="Vazquez N."/>
            <person name="Meade P."/>
            <person name="Bobadilla N.A."/>
            <person name="Pasantes-Morales H."/>
            <person name="Gamba G."/>
            <person name="Mercado A."/>
        </authorList>
    </citation>
    <scope>ACTIVITY REGULATION</scope>
</reference>
<reference key="14">
    <citation type="journal article" date="2011" name="Sci. Signal.">
        <title>System-wide temporal characterization of the proteome and phosphoproteome of human embryonic stem cell differentiation.</title>
        <authorList>
            <person name="Rigbolt K.T."/>
            <person name="Prokhorova T.A."/>
            <person name="Akimov V."/>
            <person name="Henningsen J."/>
            <person name="Johansen P.T."/>
            <person name="Kratchmarova I."/>
            <person name="Kassem M."/>
            <person name="Mann M."/>
            <person name="Olsen J.V."/>
            <person name="Blagoev B."/>
        </authorList>
    </citation>
    <scope>PHOSPHORYLATION [LARGE SCALE ANALYSIS] AT SER-967</scope>
    <scope>IDENTIFICATION BY MASS SPECTROMETRY [LARGE SCALE ANALYSIS]</scope>
</reference>
<reference key="15">
    <citation type="journal article" date="2013" name="J. Proteome Res.">
        <title>Toward a comprehensive characterization of a human cancer cell phosphoproteome.</title>
        <authorList>
            <person name="Zhou H."/>
            <person name="Di Palma S."/>
            <person name="Preisinger C."/>
            <person name="Peng M."/>
            <person name="Polat A.N."/>
            <person name="Heck A.J."/>
            <person name="Mohammed S."/>
        </authorList>
    </citation>
    <scope>PHOSPHORYLATION [LARGE SCALE ANALYSIS] AT SER-24; SER-51; SER-88; SER-967 AND THR-983</scope>
    <scope>IDENTIFICATION BY MASS SPECTROMETRY [LARGE SCALE ANALYSIS]</scope>
    <source>
        <tissue>Cervix carcinoma</tissue>
        <tissue>Erythroleukemia</tissue>
    </source>
</reference>
<reference key="16">
    <citation type="journal article" date="2014" name="J. Proteomics">
        <title>An enzyme assisted RP-RPLC approach for in-depth analysis of human liver phosphoproteome.</title>
        <authorList>
            <person name="Bian Y."/>
            <person name="Song C."/>
            <person name="Cheng K."/>
            <person name="Dong M."/>
            <person name="Wang F."/>
            <person name="Huang J."/>
            <person name="Sun D."/>
            <person name="Wang L."/>
            <person name="Ye M."/>
            <person name="Zou H."/>
        </authorList>
    </citation>
    <scope>PHOSPHORYLATION [LARGE SCALE ANALYSIS] AT SER-88</scope>
    <scope>IDENTIFICATION BY MASS SPECTROMETRY [LARGE SCALE ANALYSIS]</scope>
    <source>
        <tissue>Liver</tissue>
    </source>
</reference>
<reference evidence="21 22 23" key="17">
    <citation type="journal article" date="2019" name="Science">
        <title>Cryo-EM structures of the human cation-chloride cotransporter KCC1.</title>
        <authorList>
            <person name="Liu S."/>
            <person name="Chang S."/>
            <person name="Han B."/>
            <person name="Xu L."/>
            <person name="Zhang M."/>
            <person name="Zhao C."/>
            <person name="Yang W."/>
            <person name="Wang F."/>
            <person name="Li J."/>
            <person name="Delpire E."/>
            <person name="Ye S."/>
            <person name="Bai X.C."/>
            <person name="Guo J."/>
        </authorList>
    </citation>
    <scope>STRUCTURE BY ELECTRON MICROSCOPY (2.90 ANGSTROMS) IN COMPLEX WITH CLHORIDE AND POTASSIUM</scope>
    <scope>SUBUNIT</scope>
    <scope>DISULFIDE BONDS</scope>
    <scope>GLYCOSYLATION AT ASN-312 AND ASN-361</scope>
</reference>
<reference evidence="24 25 26" key="18">
    <citation type="journal article" date="2021" name="EMBO J.">
        <title>Phospho-regulation, nucleotide binding and ion access control in potassium-chloride cotransporters.</title>
        <authorList>
            <person name="Chi G."/>
            <person name="Ebenhoch R."/>
            <person name="Man H."/>
            <person name="Tang H."/>
            <person name="Tremblay L.E."/>
            <person name="Reggiano G."/>
            <person name="Qiu X."/>
            <person name="Bohstedt T."/>
            <person name="Liko I."/>
            <person name="Almeida F.G."/>
            <person name="Garneau A.P."/>
            <person name="Wang D."/>
            <person name="McKinley G."/>
            <person name="Moreau C.P."/>
            <person name="Bountra K.D."/>
            <person name="Abrusci P."/>
            <person name="Mukhopadhyay S.M.M."/>
            <person name="Fernandez-Cid A."/>
            <person name="Slimani S."/>
            <person name="Lavoie J.L."/>
            <person name="Burgess-Brown N.A."/>
            <person name="Tehan B."/>
            <person name="DiMaio F."/>
            <person name="Jazayeri A."/>
            <person name="Isenring P."/>
            <person name="Robinson C.V."/>
            <person name="Duerr K.L."/>
        </authorList>
    </citation>
    <scope>STRUCTURE BY ELECTRON MICROSCOPY (3.12 ANGSTROMS) OF 20-1085 OF ISOFORM 1 IN COMPLEX WITH ATP</scope>
    <scope>FUNCTION</scope>
    <scope>TRANSPORTER ACTIVITY</scope>
    <scope>SUBUNIT</scope>
    <scope>DISULFIDE BONDS</scope>
    <scope>IDENTIFICATION BY MASS SPECTROMETRY</scope>
    <scope>PHOSPHORYLATION AT SER-88; SER-734; SER-916 AND SER-1050</scope>
</reference>
<reference evidence="27 28" key="19">
    <citation type="journal article" date="2022" name="Proc. Natl. Acad. Sci. U.S.A.">
        <title>Structure of the human cation-chloride cotransport KCC1 in an outward-open state.</title>
        <authorList>
            <person name="Zhao Y."/>
            <person name="Shen J."/>
            <person name="Wang Q."/>
            <person name="Ruiz Munevar M.J."/>
            <person name="Vidossich P."/>
            <person name="De Vivo M."/>
            <person name="Zhou M."/>
            <person name="Cao E."/>
        </authorList>
    </citation>
    <scope>STRUCTURE BY ELECTRON MICROSCOPY (3.25 ANGSTROMS) OF 115-1085 IN COMPLEX WITH POTASSIUM</scope>
    <scope>FUNCTION</scope>
    <scope>SUBUNIT</scope>
    <scope>DISULFIDE BONDS</scope>
    <scope>MUTAGENESIS OF VAL-135; ILE-136; LEU-139; ARG-140; MET-215; GLU-222; ILE-223; LEU-574; ASP-575 AND LEU-581</scope>
</reference>
<gene>
    <name evidence="20" type="primary">SLC12A4</name>
    <name evidence="14" type="synonym">KCC1</name>
</gene>
<comment type="function">
    <text evidence="1 4 8 9">Mediates electroneutral potassium-chloride cotransport when activated by cell swelling (PubMed:35759661). May contribute to cell volume homeostasis in single cells (PubMed:10913127, PubMed:34031912). May be involved in the regulation of basolateral Cl(-) exit in NaCl absorbing epithelia (By similarity).</text>
</comment>
<comment type="function">
    <molecule>Isoform 4</molecule>
    <text evidence="5">No transporter activity.</text>
</comment>
<comment type="catalytic activity">
    <reaction evidence="4 8">
        <text>K(+)(in) + chloride(in) = K(+)(out) + chloride(out)</text>
        <dbReference type="Rhea" id="RHEA:72427"/>
        <dbReference type="ChEBI" id="CHEBI:17996"/>
        <dbReference type="ChEBI" id="CHEBI:29103"/>
    </reaction>
</comment>
<comment type="activity regulation">
    <text evidence="6">Inhibited by WNK3.</text>
</comment>
<comment type="biophysicochemical properties">
    <kinetics>
        <KM evidence="4">25.5 mM for K(+)</KM>
    </kinetics>
</comment>
<comment type="subunit">
    <text evidence="7 8 9 18">Homodimer; adopts a domain-swap conformation at the scissor helices connecting the transmembrane domain and C-terminal domain (PubMed:31649201, PubMed:34031912, PubMed:35759661). Heterodimer with other K-Cl cotransporters (Probable).</text>
</comment>
<comment type="interaction">
    <interactant intactId="EBI-7244836">
        <id>Q9UP95</id>
    </interactant>
    <interactant intactId="EBI-2371151">
        <id>Q9Y2T2</id>
        <label>AP3M1</label>
    </interactant>
    <organismsDiffer>false</organismsDiffer>
    <experiments>3</experiments>
</comment>
<comment type="interaction">
    <interactant intactId="EBI-7244836">
        <id>Q9UP95</id>
    </interactant>
    <interactant intactId="EBI-12819063">
        <id>Q9BYD5</id>
        <label>CNFN</label>
    </interactant>
    <organismsDiffer>false</organismsDiffer>
    <experiments>3</experiments>
</comment>
<comment type="interaction">
    <interactant intactId="EBI-7244836">
        <id>Q9UP95</id>
    </interactant>
    <interactant intactId="EBI-3867333">
        <id>A8MQ03</id>
        <label>CYSRT1</label>
    </interactant>
    <organismsDiffer>false</organismsDiffer>
    <experiments>3</experiments>
</comment>
<comment type="interaction">
    <interactant intactId="EBI-7244836">
        <id>Q9UP95</id>
    </interactant>
    <interactant intactId="EBI-10176379">
        <id>P59991</id>
        <label>KRTAP12-2</label>
    </interactant>
    <organismsDiffer>false</organismsDiffer>
    <experiments>3</experiments>
</comment>
<comment type="interaction">
    <interactant intactId="EBI-7244836">
        <id>Q9UP95</id>
    </interactant>
    <interactant intactId="EBI-12196745">
        <id>Q3LHN2</id>
        <label>KRTAP19-2</label>
    </interactant>
    <organismsDiffer>false</organismsDiffer>
    <experiments>3</experiments>
</comment>
<comment type="interaction">
    <interactant intactId="EBI-7244836">
        <id>Q9UP95</id>
    </interactant>
    <interactant intactId="EBI-11323212">
        <id>Q8IYB1</id>
        <label>MB21D2</label>
    </interactant>
    <organismsDiffer>false</organismsDiffer>
    <experiments>3</experiments>
</comment>
<comment type="interaction">
    <interactant intactId="EBI-7244836">
        <id>Q9UP95</id>
    </interactant>
    <interactant intactId="EBI-1050459">
        <id>Q8N9M5</id>
        <label>TMEM102</label>
    </interactant>
    <organismsDiffer>false</organismsDiffer>
    <experiments>3</experiments>
</comment>
<comment type="interaction">
    <interactant intactId="EBI-7244836">
        <id>Q9UP95</id>
    </interactant>
    <interactant intactId="EBI-625509">
        <id>Q8N720</id>
        <label>ZNF655</label>
    </interactant>
    <organismsDiffer>false</organismsDiffer>
    <experiments>3</experiments>
</comment>
<comment type="subcellular location">
    <subcellularLocation>
        <location evidence="17">Cell membrane</location>
        <topology evidence="7 8">Multi-pass membrane protein</topology>
    </subcellularLocation>
</comment>
<comment type="alternative products">
    <event type="alternative splicing"/>
    <isoform>
        <id>Q9UP95-1</id>
        <name>1</name>
        <sequence type="displayed"/>
    </isoform>
    <isoform>
        <id>Q9UP95-2</id>
        <name>2</name>
        <sequence type="described" ref="VSP_006113 VSP_006114"/>
    </isoform>
    <isoform>
        <id>Q9UP95-3</id>
        <name>3</name>
        <sequence type="described" ref="VSP_006112"/>
    </isoform>
    <isoform>
        <id>Q9UP95-4</id>
        <name>4</name>
        <sequence type="described" ref="VSP_006108 VSP_006109 VSP_006110 VSP_006111"/>
    </isoform>
    <isoform>
        <id>Q9UP95-5</id>
        <name>5</name>
        <sequence type="described" ref="VSP_044596"/>
    </isoform>
    <isoform>
        <id>Q9UP95-6</id>
        <name>6</name>
        <sequence type="described" ref="VSP_046146"/>
    </isoform>
    <isoform>
        <id>Q9UP95-7</id>
        <name>7</name>
        <sequence type="described" ref="VSP_046369"/>
    </isoform>
    <text>Experimental confirmation may be lacking for some isoforms.</text>
</comment>
<comment type="tissue specificity">
    <text evidence="10 11">Ubiquitous (PubMed:8663127, PubMed:9516379). Levels are much higher in erythrocytes from patients with Hb SC and Hb SS compared to normal AA erythrocytes (PubMed:9516379). This may contribute to red blood cell dehydration and to the manifestation of sickle cell disease by increasing the intracellular concentration of HbS (PubMed:9516379).</text>
</comment>
<comment type="tissue specificity">
    <molecule>Isoform 1</molecule>
    <text evidence="11">Not detected in circulating reticulocytes.</text>
</comment>
<comment type="PTM">
    <text evidence="8">Phosphorylated, phosphorylation may regulate transporter activity.</text>
</comment>
<comment type="similarity">
    <text evidence="16">Belongs to the SLC12A transporter family. K/Cl co-transporter subfamily.</text>
</comment>
<comment type="sequence caution" evidence="16">
    <conflict type="frameshift">
        <sequence resource="EMBL-CDS" id="AAC35282"/>
    </conflict>
</comment>
<comment type="sequence caution" evidence="16">
    <conflict type="erroneous initiation">
        <sequence resource="EMBL-CDS" id="BAG57330"/>
    </conflict>
    <text>Truncated N-terminus.</text>
</comment>